<comment type="function">
    <text evidence="1">Catalyzes the cleavage of L-kynurenine (L-Kyn) and L-3-hydroxykynurenine (L-3OHKyn) into anthranilic acid (AA) and 3-hydroxyanthranilic acid (3-OHAA), respectively.</text>
</comment>
<comment type="catalytic activity">
    <reaction evidence="1">
        <text>L-kynurenine + H2O = anthranilate + L-alanine + H(+)</text>
        <dbReference type="Rhea" id="RHEA:16813"/>
        <dbReference type="ChEBI" id="CHEBI:15377"/>
        <dbReference type="ChEBI" id="CHEBI:15378"/>
        <dbReference type="ChEBI" id="CHEBI:16567"/>
        <dbReference type="ChEBI" id="CHEBI:57959"/>
        <dbReference type="ChEBI" id="CHEBI:57972"/>
        <dbReference type="EC" id="3.7.1.3"/>
    </reaction>
</comment>
<comment type="catalytic activity">
    <reaction evidence="1">
        <text>3-hydroxy-L-kynurenine + H2O = 3-hydroxyanthranilate + L-alanine + H(+)</text>
        <dbReference type="Rhea" id="RHEA:25143"/>
        <dbReference type="ChEBI" id="CHEBI:15377"/>
        <dbReference type="ChEBI" id="CHEBI:15378"/>
        <dbReference type="ChEBI" id="CHEBI:36559"/>
        <dbReference type="ChEBI" id="CHEBI:57972"/>
        <dbReference type="ChEBI" id="CHEBI:58125"/>
        <dbReference type="EC" id="3.7.1.3"/>
    </reaction>
</comment>
<comment type="cofactor">
    <cofactor evidence="1">
        <name>pyridoxal 5'-phosphate</name>
        <dbReference type="ChEBI" id="CHEBI:597326"/>
    </cofactor>
</comment>
<comment type="pathway">
    <text evidence="1">Amino-acid degradation; L-kynurenine degradation; L-alanine and anthranilate from L-kynurenine: step 1/1.</text>
</comment>
<comment type="pathway">
    <text evidence="1">Cofactor biosynthesis; NAD(+) biosynthesis; quinolinate from L-kynurenine: step 2/3.</text>
</comment>
<comment type="subunit">
    <text evidence="1">Homodimer.</text>
</comment>
<comment type="subcellular location">
    <subcellularLocation>
        <location evidence="1">Cytoplasm</location>
    </subcellularLocation>
</comment>
<comment type="similarity">
    <text evidence="1">Belongs to the kynureninase family.</text>
</comment>
<accession>Q1DZA6</accession>
<accession>A0A0D6K9P5</accession>
<proteinExistence type="inferred from homology"/>
<dbReference type="EC" id="3.7.1.3" evidence="1"/>
<dbReference type="EMBL" id="GG704914">
    <property type="protein sequence ID" value="EAS33333.2"/>
    <property type="molecule type" value="Genomic_DNA"/>
</dbReference>
<dbReference type="RefSeq" id="XP_001244916.2">
    <property type="nucleotide sequence ID" value="XM_001244915.2"/>
</dbReference>
<dbReference type="SMR" id="Q1DZA6"/>
<dbReference type="FunCoup" id="Q1DZA6">
    <property type="interactions" value="200"/>
</dbReference>
<dbReference type="STRING" id="246410.Q1DZA6"/>
<dbReference type="GeneID" id="4564403"/>
<dbReference type="KEGG" id="cim:CIMG_04357"/>
<dbReference type="VEuPathDB" id="FungiDB:CIMG_04357"/>
<dbReference type="InParanoid" id="Q1DZA6"/>
<dbReference type="OMA" id="YTEVWEF"/>
<dbReference type="OrthoDB" id="5978656at2759"/>
<dbReference type="UniPathway" id="UPA00253">
    <property type="reaction ID" value="UER00329"/>
</dbReference>
<dbReference type="UniPathway" id="UPA00334">
    <property type="reaction ID" value="UER00455"/>
</dbReference>
<dbReference type="Proteomes" id="UP000001261">
    <property type="component" value="Unassembled WGS sequence"/>
</dbReference>
<dbReference type="GO" id="GO:0005737">
    <property type="term" value="C:cytoplasm"/>
    <property type="evidence" value="ECO:0007669"/>
    <property type="project" value="UniProtKB-SubCell"/>
</dbReference>
<dbReference type="GO" id="GO:0030429">
    <property type="term" value="F:kynureninase activity"/>
    <property type="evidence" value="ECO:0007669"/>
    <property type="project" value="UniProtKB-UniRule"/>
</dbReference>
<dbReference type="GO" id="GO:0030170">
    <property type="term" value="F:pyridoxal phosphate binding"/>
    <property type="evidence" value="ECO:0007669"/>
    <property type="project" value="UniProtKB-UniRule"/>
</dbReference>
<dbReference type="GO" id="GO:0034354">
    <property type="term" value="P:'de novo' NAD biosynthetic process from L-tryptophan"/>
    <property type="evidence" value="ECO:0007669"/>
    <property type="project" value="UniProtKB-UniRule"/>
</dbReference>
<dbReference type="GO" id="GO:0043420">
    <property type="term" value="P:anthranilate metabolic process"/>
    <property type="evidence" value="ECO:0007669"/>
    <property type="project" value="UniProtKB-UniRule"/>
</dbReference>
<dbReference type="GO" id="GO:0097053">
    <property type="term" value="P:L-kynurenine catabolic process"/>
    <property type="evidence" value="ECO:0007669"/>
    <property type="project" value="UniProtKB-UniRule"/>
</dbReference>
<dbReference type="GO" id="GO:0019441">
    <property type="term" value="P:L-tryptophan catabolic process to kynurenine"/>
    <property type="evidence" value="ECO:0007669"/>
    <property type="project" value="TreeGrafter"/>
</dbReference>
<dbReference type="GO" id="GO:0019805">
    <property type="term" value="P:quinolinate biosynthetic process"/>
    <property type="evidence" value="ECO:0007669"/>
    <property type="project" value="UniProtKB-UniRule"/>
</dbReference>
<dbReference type="FunFam" id="3.40.640.10:FF:000031">
    <property type="entry name" value="Kynureninase"/>
    <property type="match status" value="1"/>
</dbReference>
<dbReference type="Gene3D" id="3.90.1150.10">
    <property type="entry name" value="Aspartate Aminotransferase, domain 1"/>
    <property type="match status" value="1"/>
</dbReference>
<dbReference type="Gene3D" id="3.40.640.10">
    <property type="entry name" value="Type I PLP-dependent aspartate aminotransferase-like (Major domain)"/>
    <property type="match status" value="1"/>
</dbReference>
<dbReference type="HAMAP" id="MF_01970">
    <property type="entry name" value="Kynureninase"/>
    <property type="match status" value="1"/>
</dbReference>
<dbReference type="InterPro" id="IPR010111">
    <property type="entry name" value="Kynureninase"/>
</dbReference>
<dbReference type="InterPro" id="IPR015424">
    <property type="entry name" value="PyrdxlP-dep_Trfase"/>
</dbReference>
<dbReference type="InterPro" id="IPR015421">
    <property type="entry name" value="PyrdxlP-dep_Trfase_major"/>
</dbReference>
<dbReference type="InterPro" id="IPR015422">
    <property type="entry name" value="PyrdxlP-dep_Trfase_small"/>
</dbReference>
<dbReference type="NCBIfam" id="TIGR01814">
    <property type="entry name" value="kynureninase"/>
    <property type="match status" value="1"/>
</dbReference>
<dbReference type="PANTHER" id="PTHR14084">
    <property type="entry name" value="KYNURENINASE"/>
    <property type="match status" value="1"/>
</dbReference>
<dbReference type="PANTHER" id="PTHR14084:SF0">
    <property type="entry name" value="KYNURENINASE"/>
    <property type="match status" value="1"/>
</dbReference>
<dbReference type="Pfam" id="PF22580">
    <property type="entry name" value="KYNU_C"/>
    <property type="match status" value="1"/>
</dbReference>
<dbReference type="PIRSF" id="PIRSF038800">
    <property type="entry name" value="KYNU"/>
    <property type="match status" value="1"/>
</dbReference>
<dbReference type="SUPFAM" id="SSF53383">
    <property type="entry name" value="PLP-dependent transferases"/>
    <property type="match status" value="1"/>
</dbReference>
<reference key="1">
    <citation type="journal article" date="2009" name="Genome Res.">
        <title>Comparative genomic analyses of the human fungal pathogens Coccidioides and their relatives.</title>
        <authorList>
            <person name="Sharpton T.J."/>
            <person name="Stajich J.E."/>
            <person name="Rounsley S.D."/>
            <person name="Gardner M.J."/>
            <person name="Wortman J.R."/>
            <person name="Jordar V.S."/>
            <person name="Maiti R."/>
            <person name="Kodira C.D."/>
            <person name="Neafsey D.E."/>
            <person name="Zeng Q."/>
            <person name="Hung C.-Y."/>
            <person name="McMahan C."/>
            <person name="Muszewska A."/>
            <person name="Grynberg M."/>
            <person name="Mandel M.A."/>
            <person name="Kellner E.M."/>
            <person name="Barker B.M."/>
            <person name="Galgiani J.N."/>
            <person name="Orbach M.J."/>
            <person name="Kirkland T.N."/>
            <person name="Cole G.T."/>
            <person name="Henn M.R."/>
            <person name="Birren B.W."/>
            <person name="Taylor J.W."/>
        </authorList>
    </citation>
    <scope>NUCLEOTIDE SEQUENCE [LARGE SCALE GENOMIC DNA]</scope>
    <source>
        <strain>RS</strain>
    </source>
</reference>
<reference key="2">
    <citation type="journal article" date="2010" name="Genome Res.">
        <title>Population genomic sequencing of Coccidioides fungi reveals recent hybridization and transposon control.</title>
        <authorList>
            <person name="Neafsey D.E."/>
            <person name="Barker B.M."/>
            <person name="Sharpton T.J."/>
            <person name="Stajich J.E."/>
            <person name="Park D.J."/>
            <person name="Whiston E."/>
            <person name="Hung C.-Y."/>
            <person name="McMahan C."/>
            <person name="White J."/>
            <person name="Sykes S."/>
            <person name="Heiman D."/>
            <person name="Young S."/>
            <person name="Zeng Q."/>
            <person name="Abouelleil A."/>
            <person name="Aftuck L."/>
            <person name="Bessette D."/>
            <person name="Brown A."/>
            <person name="FitzGerald M."/>
            <person name="Lui A."/>
            <person name="Macdonald J.P."/>
            <person name="Priest M."/>
            <person name="Orbach M.J."/>
            <person name="Galgiani J.N."/>
            <person name="Kirkland T.N."/>
            <person name="Cole G.T."/>
            <person name="Birren B.W."/>
            <person name="Henn M.R."/>
            <person name="Taylor J.W."/>
            <person name="Rounsley S.D."/>
        </authorList>
    </citation>
    <scope>GENOME REANNOTATION</scope>
    <source>
        <strain>RS</strain>
    </source>
</reference>
<gene>
    <name evidence="1" type="primary">BNA5</name>
    <name type="ORF">CIMG_04357</name>
</gene>
<sequence>MVDSSKAPLPFRDSALSFKREYAESLDAQDPLREFRNQFIIPSKADLKRKSLAVAEGESPSSDCIYLCGNSLGLQPKNARMYIDRFLQTWATKAVLGHFTKLEDSPFPPYMDYDDVTSKLMAQVVGALPSEVAVMSTLTGNLHLLMASFYRPTKEKYKIILEGKAFPSDHYAVESQIRHHGFDPKDAMVLIEPKDLKEPVLPTERILKTIDEHASSTALILLPGIQYYSGQYLDIPTITAHAHSKGLLIGWDCAHAAGNVELKLHDWDVDFAAWCTYKYVNSGPGSMGALFVHEKHGQVNLENKEDPYRHRLTGWWGGDKSLRFLMDNNFVPRPGAAGFQLSNPSVLDMTAVLSSLDIFDKATMPALRKKSLELTAYLEHLLLNSPEGVRPSDDPFSIITPSDPEARGAQLSVLLKPGLLDSVFSHLVDNGVILDERKPDVIRVAPAPLYNTFTDVWDFVQIFFDACRKAAQEKDTTS</sequence>
<organism>
    <name type="scientific">Coccidioides immitis (strain RS)</name>
    <name type="common">Valley fever fungus</name>
    <dbReference type="NCBI Taxonomy" id="246410"/>
    <lineage>
        <taxon>Eukaryota</taxon>
        <taxon>Fungi</taxon>
        <taxon>Dikarya</taxon>
        <taxon>Ascomycota</taxon>
        <taxon>Pezizomycotina</taxon>
        <taxon>Eurotiomycetes</taxon>
        <taxon>Eurotiomycetidae</taxon>
        <taxon>Onygenales</taxon>
        <taxon>Onygenaceae</taxon>
        <taxon>Coccidioides</taxon>
    </lineage>
</organism>
<protein>
    <recommendedName>
        <fullName evidence="1">Kynureninase</fullName>
        <ecNumber evidence="1">3.7.1.3</ecNumber>
    </recommendedName>
    <alternativeName>
        <fullName evidence="1">Biosynthesis of nicotinic acid protein 5</fullName>
    </alternativeName>
    <alternativeName>
        <fullName evidence="1">L-kynurenine hydrolase</fullName>
    </alternativeName>
</protein>
<keyword id="KW-0963">Cytoplasm</keyword>
<keyword id="KW-0378">Hydrolase</keyword>
<keyword id="KW-0662">Pyridine nucleotide biosynthesis</keyword>
<keyword id="KW-0663">Pyridoxal phosphate</keyword>
<keyword id="KW-1185">Reference proteome</keyword>
<name>KYNU_COCIM</name>
<feature type="chain" id="PRO_0000360868" description="Kynureninase">
    <location>
        <begin position="1"/>
        <end position="478"/>
    </location>
</feature>
<feature type="binding site" evidence="1">
    <location>
        <position position="138"/>
    </location>
    <ligand>
        <name>pyridoxal 5'-phosphate</name>
        <dbReference type="ChEBI" id="CHEBI:597326"/>
    </ligand>
</feature>
<feature type="binding site" evidence="1">
    <location>
        <position position="139"/>
    </location>
    <ligand>
        <name>pyridoxal 5'-phosphate</name>
        <dbReference type="ChEBI" id="CHEBI:597326"/>
    </ligand>
</feature>
<feature type="binding site" evidence="1">
    <location>
        <begin position="166"/>
        <end position="169"/>
    </location>
    <ligand>
        <name>pyridoxal 5'-phosphate</name>
        <dbReference type="ChEBI" id="CHEBI:597326"/>
    </ligand>
</feature>
<feature type="binding site" evidence="1">
    <location>
        <position position="252"/>
    </location>
    <ligand>
        <name>pyridoxal 5'-phosphate</name>
        <dbReference type="ChEBI" id="CHEBI:597326"/>
    </ligand>
</feature>
<feature type="binding site" evidence="1">
    <location>
        <position position="255"/>
    </location>
    <ligand>
        <name>pyridoxal 5'-phosphate</name>
        <dbReference type="ChEBI" id="CHEBI:597326"/>
    </ligand>
</feature>
<feature type="binding site" evidence="1">
    <location>
        <position position="277"/>
    </location>
    <ligand>
        <name>pyridoxal 5'-phosphate</name>
        <dbReference type="ChEBI" id="CHEBI:597326"/>
    </ligand>
</feature>
<feature type="binding site" evidence="1">
    <location>
        <position position="315"/>
    </location>
    <ligand>
        <name>pyridoxal 5'-phosphate</name>
        <dbReference type="ChEBI" id="CHEBI:597326"/>
    </ligand>
</feature>
<feature type="binding site" evidence="1">
    <location>
        <position position="343"/>
    </location>
    <ligand>
        <name>pyridoxal 5'-phosphate</name>
        <dbReference type="ChEBI" id="CHEBI:597326"/>
    </ligand>
</feature>
<feature type="modified residue" description="N6-(pyridoxal phosphate)lysine" evidence="1">
    <location>
        <position position="278"/>
    </location>
</feature>
<evidence type="ECO:0000255" key="1">
    <source>
        <dbReference type="HAMAP-Rule" id="MF_03017"/>
    </source>
</evidence>